<evidence type="ECO:0000250" key="1">
    <source>
        <dbReference type="UniProtKB" id="P10288"/>
    </source>
</evidence>
<evidence type="ECO:0000250" key="2">
    <source>
        <dbReference type="UniProtKB" id="P15116"/>
    </source>
</evidence>
<evidence type="ECO:0000250" key="3">
    <source>
        <dbReference type="UniProtKB" id="P19022"/>
    </source>
</evidence>
<evidence type="ECO:0000250" key="4">
    <source>
        <dbReference type="UniProtKB" id="Q9Z1Y3"/>
    </source>
</evidence>
<evidence type="ECO:0000255" key="5"/>
<evidence type="ECO:0000255" key="6">
    <source>
        <dbReference type="PROSITE-ProRule" id="PRU00043"/>
    </source>
</evidence>
<evidence type="ECO:0000256" key="7">
    <source>
        <dbReference type="SAM" id="MobiDB-lite"/>
    </source>
</evidence>
<evidence type="ECO:0000269" key="8">
    <source>
    </source>
</evidence>
<evidence type="ECO:0000303" key="9">
    <source>
    </source>
</evidence>
<accession>P19534</accession>
<accession>F1N0S5</accession>
<proteinExistence type="evidence at transcript level"/>
<protein>
    <recommendedName>
        <fullName>Cadherin-2</fullName>
    </recommendedName>
    <alternativeName>
        <fullName>Neural cadherin</fullName>
        <shortName evidence="9">N-cadherin</shortName>
    </alternativeName>
    <cdAntigenName>CD325</cdAntigenName>
</protein>
<reference key="1">
    <citation type="journal article" date="2009" name="Genome Biol.">
        <title>A whole-genome assembly of the domestic cow, Bos taurus.</title>
        <authorList>
            <person name="Zimin A.V."/>
            <person name="Delcher A.L."/>
            <person name="Florea L."/>
            <person name="Kelley D.R."/>
            <person name="Schatz M.C."/>
            <person name="Puiu D."/>
            <person name="Hanrahan F."/>
            <person name="Pertea G."/>
            <person name="Van Tassell C.P."/>
            <person name="Sonstegard T.S."/>
            <person name="Marcais G."/>
            <person name="Roberts M."/>
            <person name="Subramanian P."/>
            <person name="Yorke J.A."/>
            <person name="Salzberg S.L."/>
        </authorList>
    </citation>
    <scope>NUCLEOTIDE SEQUENCE [LARGE SCALE GENOMIC DNA]</scope>
    <source>
        <strain>Hereford</strain>
    </source>
</reference>
<reference key="2">
    <citation type="journal article" date="1990" name="EMBO J.">
        <title>Identification and cloning of two species of cadherins in bovine endothelial cells.</title>
        <authorList>
            <person name="Liaw C.W."/>
            <person name="Cannon C."/>
            <person name="Power M.D."/>
            <person name="Kiboneka P.K."/>
            <person name="Rubin L.L."/>
        </authorList>
    </citation>
    <scope>NUCLEOTIDE SEQUENCE [MRNA] OF 30-906</scope>
    <scope>TISSUE SPECIFICITY</scope>
</reference>
<feature type="signal peptide" evidence="5">
    <location>
        <begin position="1"/>
        <end position="25"/>
    </location>
</feature>
<feature type="propeptide" id="PRO_0000003729">
    <location>
        <begin position="26"/>
        <end position="159"/>
    </location>
</feature>
<feature type="chain" id="PRO_0000003730" description="Cadherin-2">
    <location>
        <begin position="160"/>
        <end position="906"/>
    </location>
</feature>
<feature type="topological domain" description="Extracellular" evidence="5">
    <location>
        <begin position="160"/>
        <end position="724"/>
    </location>
</feature>
<feature type="transmembrane region" description="Helical" evidence="5">
    <location>
        <begin position="725"/>
        <end position="746"/>
    </location>
</feature>
<feature type="topological domain" description="Cytoplasmic" evidence="5">
    <location>
        <begin position="747"/>
        <end position="906"/>
    </location>
</feature>
<feature type="domain" description="Cadherin 1" evidence="6">
    <location>
        <begin position="160"/>
        <end position="267"/>
    </location>
</feature>
<feature type="domain" description="Cadherin 2" evidence="6">
    <location>
        <begin position="268"/>
        <end position="392"/>
    </location>
</feature>
<feature type="domain" description="Cadherin 3" evidence="6">
    <location>
        <begin position="393"/>
        <end position="497"/>
    </location>
</feature>
<feature type="domain" description="Cadherin 4" evidence="6">
    <location>
        <begin position="498"/>
        <end position="603"/>
    </location>
</feature>
<feature type="domain" description="Cadherin 5" evidence="6">
    <location>
        <begin position="604"/>
        <end position="714"/>
    </location>
</feature>
<feature type="region of interest" description="Disordered" evidence="7">
    <location>
        <begin position="863"/>
        <end position="884"/>
    </location>
</feature>
<feature type="compositionally biased region" description="Low complexity" evidence="7">
    <location>
        <begin position="863"/>
        <end position="880"/>
    </location>
</feature>
<feature type="binding site" evidence="2">
    <location>
        <position position="170"/>
    </location>
    <ligand>
        <name>Ca(2+)</name>
        <dbReference type="ChEBI" id="CHEBI:29108"/>
        <label>1</label>
    </ligand>
</feature>
<feature type="binding site" evidence="2">
    <location>
        <position position="170"/>
    </location>
    <ligand>
        <name>Ca(2+)</name>
        <dbReference type="ChEBI" id="CHEBI:29108"/>
        <label>2</label>
    </ligand>
</feature>
<feature type="binding site" evidence="2">
    <location>
        <position position="226"/>
    </location>
    <ligand>
        <name>Ca(2+)</name>
        <dbReference type="ChEBI" id="CHEBI:29108"/>
        <label>1</label>
    </ligand>
</feature>
<feature type="binding site" evidence="2">
    <location>
        <position position="228"/>
    </location>
    <ligand>
        <name>Ca(2+)</name>
        <dbReference type="ChEBI" id="CHEBI:29108"/>
        <label>1</label>
    </ligand>
</feature>
<feature type="binding site" evidence="2">
    <location>
        <position position="228"/>
    </location>
    <ligand>
        <name>Ca(2+)</name>
        <dbReference type="ChEBI" id="CHEBI:29108"/>
        <label>2</label>
    </ligand>
</feature>
<feature type="binding site" evidence="2">
    <location>
        <position position="259"/>
    </location>
    <ligand>
        <name>Ca(2+)</name>
        <dbReference type="ChEBI" id="CHEBI:29108"/>
        <label>2</label>
    </ligand>
</feature>
<feature type="binding site" evidence="2">
    <location>
        <position position="260"/>
    </location>
    <ligand>
        <name>Ca(2+)</name>
        <dbReference type="ChEBI" id="CHEBI:29108"/>
        <label>2</label>
    </ligand>
</feature>
<feature type="binding site" evidence="2">
    <location>
        <position position="261"/>
    </location>
    <ligand>
        <name>Ca(2+)</name>
        <dbReference type="ChEBI" id="CHEBI:29108"/>
        <label>3</label>
    </ligand>
</feature>
<feature type="binding site" evidence="2">
    <location>
        <position position="262"/>
    </location>
    <ligand>
        <name>Ca(2+)</name>
        <dbReference type="ChEBI" id="CHEBI:29108"/>
        <label>1</label>
    </ligand>
</feature>
<feature type="binding site" evidence="2">
    <location>
        <position position="262"/>
    </location>
    <ligand>
        <name>Ca(2+)</name>
        <dbReference type="ChEBI" id="CHEBI:29108"/>
        <label>2</label>
    </ligand>
</feature>
<feature type="binding site" evidence="2">
    <location>
        <position position="263"/>
    </location>
    <ligand>
        <name>Ca(2+)</name>
        <dbReference type="ChEBI" id="CHEBI:29108"/>
        <label>3</label>
    </ligand>
</feature>
<feature type="binding site" evidence="2">
    <location>
        <position position="293"/>
    </location>
    <ligand>
        <name>Ca(2+)</name>
        <dbReference type="ChEBI" id="CHEBI:29108"/>
        <label>3</label>
    </ligand>
</feature>
<feature type="binding site" evidence="2">
    <location>
        <position position="295"/>
    </location>
    <ligand>
        <name>Ca(2+)</name>
        <dbReference type="ChEBI" id="CHEBI:29108"/>
        <label>2</label>
    </ligand>
</feature>
<feature type="binding site" evidence="2">
    <location>
        <position position="301"/>
    </location>
    <ligand>
        <name>Ca(2+)</name>
        <dbReference type="ChEBI" id="CHEBI:29108"/>
        <label>3</label>
    </ligand>
</feature>
<feature type="binding site" evidence="2">
    <location>
        <position position="353"/>
    </location>
    <ligand>
        <name>Ca(2+)</name>
        <dbReference type="ChEBI" id="CHEBI:29108"/>
        <label>3</label>
    </ligand>
</feature>
<feature type="modified residue" description="Phosphoserine" evidence="3">
    <location>
        <position position="96"/>
    </location>
</feature>
<feature type="modified residue" description="Phosphoserine" evidence="3">
    <location>
        <position position="135"/>
    </location>
</feature>
<feature type="glycosylation site" description="N-linked (GlcNAc...) asparagine" evidence="5">
    <location>
        <position position="190"/>
    </location>
</feature>
<feature type="glycosylation site" description="N-linked (GlcNAc...) asparagine" evidence="5">
    <location>
        <position position="273"/>
    </location>
</feature>
<feature type="glycosylation site" description="N-linked (GlcNAc...) asparagine" evidence="5">
    <location>
        <position position="325"/>
    </location>
</feature>
<feature type="glycosylation site" description="N-linked (GlcNAc...) asparagine" evidence="5">
    <location>
        <position position="357"/>
    </location>
</feature>
<feature type="glycosylation site" description="N-linked (GlcNAc...) asparagine" evidence="5">
    <location>
        <position position="402"/>
    </location>
</feature>
<feature type="glycosylation site" description="N-linked (GlcNAc...) asparagine" evidence="5">
    <location>
        <position position="572"/>
    </location>
</feature>
<feature type="glycosylation site" description="N-linked (GlcNAc...) asparagine" evidence="5">
    <location>
        <position position="622"/>
    </location>
</feature>
<feature type="glycosylation site" description="N-linked (GlcNAc...) asparagine" evidence="5">
    <location>
        <position position="651"/>
    </location>
</feature>
<feature type="glycosylation site" description="N-linked (GlcNAc...) asparagine" evidence="5">
    <location>
        <position position="692"/>
    </location>
</feature>
<organism>
    <name type="scientific">Bos taurus</name>
    <name type="common">Bovine</name>
    <dbReference type="NCBI Taxonomy" id="9913"/>
    <lineage>
        <taxon>Eukaryota</taxon>
        <taxon>Metazoa</taxon>
        <taxon>Chordata</taxon>
        <taxon>Craniata</taxon>
        <taxon>Vertebrata</taxon>
        <taxon>Euteleostomi</taxon>
        <taxon>Mammalia</taxon>
        <taxon>Eutheria</taxon>
        <taxon>Laurasiatheria</taxon>
        <taxon>Artiodactyla</taxon>
        <taxon>Ruminantia</taxon>
        <taxon>Pecora</taxon>
        <taxon>Bovidae</taxon>
        <taxon>Bovinae</taxon>
        <taxon>Bos</taxon>
    </lineage>
</organism>
<gene>
    <name type="primary">CDH2</name>
</gene>
<comment type="function">
    <text evidence="1 2">Calcium-dependent cell adhesion protein; preferentially mediates homotypic cell-cell adhesion by dimerization with a CDH2 chain from another cell. Cadherins may thus contribute to the sorting of heterogeneous cell types. Acts as a regulator of neural stem cells quiescence by mediating anchorage of neural stem cells to ependymocytes in the adult subependymal zone: upon cleavage by MMP24, CDH2-mediated anchorage is affected, leading to modulate neural stem cell quiescence. Plays a role in cell-to-cell junction formation between pancreatic beta cells and neural crest stem (NCS) cells, promoting the formation of processes by NCS cells (By similarity). Required for proper neurite branching. Required for pre- and postsynaptic organization (By similarity). CDH2 may be involved in neuronal recognition mechanism. In hippocampal neurons, may regulate dendritic spine density.</text>
</comment>
<comment type="subunit">
    <text evidence="2 3 4">Homodimer (via extracellular region). Can also form heterodimers with other cadherins (via extracellular region). Dimerization occurs in trans, i.e. with a cadherin chain from another cell (By similarity). Interacts with CDCP1 (By similarity). Interacts with PCDH8; this complex may also include TAOK2 (By similarity). The interaction with PCDH8 may lead to internalization through TAOK2/p38 MAPK pathway (By similarity). Identified in a complex containing FGFR4, NCAM1, CDH2, PLCG1, FRS2, SRC, SHC1, GAP43 and CTTN. May interact with OBSCN (via protein kinase domain 2) (By similarity). Interacts with FBXO45 (By similarity).</text>
</comment>
<comment type="subcellular location">
    <subcellularLocation>
        <location evidence="2">Cell membrane</location>
        <topology evidence="5">Single-pass type I membrane protein</topology>
    </subcellularLocation>
    <subcellularLocation>
        <location evidence="2">Cell membrane</location>
        <location evidence="2">Sarcolemma</location>
    </subcellularLocation>
    <subcellularLocation>
        <location evidence="3">Cell junction</location>
    </subcellularLocation>
    <subcellularLocation>
        <location evidence="2">Cell surface</location>
    </subcellularLocation>
    <subcellularLocation>
        <location evidence="2">Cell junction</location>
        <location evidence="2">Desmosome</location>
    </subcellularLocation>
    <subcellularLocation>
        <location evidence="2">Cell junction</location>
        <location evidence="2">Adherens junction</location>
    </subcellularLocation>
    <text evidence="2">Colocalizes with TMEM65 at the intercalated disk in cardiomyocytes (By similarity). Colocalizes with OBSCN at the intercalated disk and sarcolemma in cardiomyocytes (By similarity).</text>
</comment>
<comment type="tissue specificity">
    <text evidence="8">Detected in liver, kidney, heart and brain capillaries.</text>
</comment>
<comment type="domain">
    <text evidence="2">Three calcium ions are usually bound at the interface of each cadherin domain and rigidify the connections, imparting a strong curvature to the full-length ectodomain. Calcium-binding sites are occupied sequentially in the order of site 3, then site 2 and site 1.</text>
</comment>
<comment type="PTM">
    <text evidence="2">Cleaved by MMP24. Ectodomain cleavage leads to the generation of a soluble 90 kDa N-terminal soluble fragment and a 45 kDa membrane-bound C-terminal fragment 1 (CTF1), which is further cleaved by gamma-secretase into a 35 kDa (By similarity). Cleavage in neural stem cells by MMP24 affects CDH2-mediated anchorage of neural stem cells to ependymocytes in the adult subependymal zone, leading to modulate neural stem cell quiescence (By similarity).</text>
</comment>
<comment type="PTM">
    <text evidence="2">May be phosphorylated by OBSCN.</text>
</comment>
<sequence length="906" mass="99807">MCRIVGAPRTLLPLLAALLQASVDASGEISLCKTGFPEDVYSAVLSRDVLEGQPLLNVKFSNCNGKRKVQYESSEPADFKVDEDGMVYAVRSFPLSSEHSKFLIYAQDKETQEKWQVAVKLSLKPALPEDSVKESREIEEIVFPRQVTKHNGYLQRQKRDWVIPPINLPENSRGPFPQELVRIRSDRDKNLSLRYSVTGPGADQPPTGIFIINPISGQLSVTKPLDRELIARFHLRAHAVDINGNQVENPIDIVINVIDMNDNRPEFLHQVWNGTVPEGSKPGTYVMTVTAIDADDPNALNGMLRYRILSQAPSTPSPNMFTINNETGDIITVAAGLDREKVQQYTLIIQATDMEGNPTYGLSNTATAVITVTDVNDNPPEFTAMTFYGEVPENRVDVIVANLTVTDKDQPHTPAWNAIYRISGGDPAGRFAIQTDPNSNDGLVTVVKPIDFETNRMYVLTVAAENQVPLAKGIQHPPQSTATVSVTVIDVNENPYFAPNPKIIRQEEGLHAGTVLTTFTAQDPDRYMQQNIRYTKLSDPANWLKIDSVNGQITTIAVLDRESPNVKANIYNATFLASDNGIPPMSGTGTLQIYLLDINDNAPQVLPQEAEICETPDPNSINITALDYDIDPNAGPFAFDLPLSPVTIKRNWTITRLNGDFAQLNLKIKFLEAGIYEVPIIITDSGNPPKSNISILRVKVCQCDSNGDCTDVDRIVGAGLGTGAIIAILLCIIILLILVLMFVVWMKRRDKERQAKQLLIDPEDDVRDNILKYDEEGGGEEDQDYDLSQLQQPDTVEPDAIKPVGIRRLDERPIHAEPQYPVRSAAPHPGDIGDFINEGLKAADNDPTAPPYDSLLVFDYEGSGSTAGSLSSLNSSSSGGEQDYDYLNDWGPRFKKLADMYGGGDD</sequence>
<keyword id="KW-0106">Calcium</keyword>
<keyword id="KW-0130">Cell adhesion</keyword>
<keyword id="KW-0965">Cell junction</keyword>
<keyword id="KW-1003">Cell membrane</keyword>
<keyword id="KW-0165">Cleavage on pair of basic residues</keyword>
<keyword id="KW-0325">Glycoprotein</keyword>
<keyword id="KW-0472">Membrane</keyword>
<keyword id="KW-0479">Metal-binding</keyword>
<keyword id="KW-0597">Phosphoprotein</keyword>
<keyword id="KW-1185">Reference proteome</keyword>
<keyword id="KW-0677">Repeat</keyword>
<keyword id="KW-0732">Signal</keyword>
<keyword id="KW-0812">Transmembrane</keyword>
<keyword id="KW-1133">Transmembrane helix</keyword>
<name>CADH2_BOVIN</name>
<dbReference type="EMBL" id="DAAA02056501">
    <property type="status" value="NOT_ANNOTATED_CDS"/>
    <property type="molecule type" value="Genomic_DNA"/>
</dbReference>
<dbReference type="EMBL" id="X53615">
    <property type="protein sequence ID" value="CAA37677.1"/>
    <property type="molecule type" value="mRNA"/>
</dbReference>
<dbReference type="PIR" id="S11693">
    <property type="entry name" value="IJBOCN"/>
</dbReference>
<dbReference type="SMR" id="P19534"/>
<dbReference type="FunCoup" id="P19534">
    <property type="interactions" value="594"/>
</dbReference>
<dbReference type="STRING" id="9913.ENSBTAP00000028238"/>
<dbReference type="GlyCosmos" id="P19534">
    <property type="glycosylation" value="9 sites, No reported glycans"/>
</dbReference>
<dbReference type="GlyGen" id="P19534">
    <property type="glycosylation" value="9 sites"/>
</dbReference>
<dbReference type="PaxDb" id="9913-ENSBTAP00000028238"/>
<dbReference type="eggNOG" id="KOG3594">
    <property type="taxonomic scope" value="Eukaryota"/>
</dbReference>
<dbReference type="HOGENOM" id="CLU_005284_2_0_1"/>
<dbReference type="InParanoid" id="P19534"/>
<dbReference type="OrthoDB" id="6079678at2759"/>
<dbReference type="TreeFam" id="TF316817"/>
<dbReference type="Proteomes" id="UP000009136">
    <property type="component" value="Unplaced"/>
</dbReference>
<dbReference type="GO" id="GO:0005912">
    <property type="term" value="C:adherens junction"/>
    <property type="evidence" value="ECO:0000250"/>
    <property type="project" value="UniProtKB"/>
</dbReference>
<dbReference type="GO" id="GO:0045177">
    <property type="term" value="C:apical part of cell"/>
    <property type="evidence" value="ECO:0000318"/>
    <property type="project" value="GO_Central"/>
</dbReference>
<dbReference type="GO" id="GO:0016342">
    <property type="term" value="C:catenin complex"/>
    <property type="evidence" value="ECO:0000318"/>
    <property type="project" value="GO_Central"/>
</dbReference>
<dbReference type="GO" id="GO:0030054">
    <property type="term" value="C:cell junction"/>
    <property type="evidence" value="ECO:0000250"/>
    <property type="project" value="UniProtKB"/>
</dbReference>
<dbReference type="GO" id="GO:0009986">
    <property type="term" value="C:cell surface"/>
    <property type="evidence" value="ECO:0000250"/>
    <property type="project" value="UniProtKB"/>
</dbReference>
<dbReference type="GO" id="GO:0005911">
    <property type="term" value="C:cell-cell junction"/>
    <property type="evidence" value="ECO:0000250"/>
    <property type="project" value="UniProtKB"/>
</dbReference>
<dbReference type="GO" id="GO:0005737">
    <property type="term" value="C:cytoplasm"/>
    <property type="evidence" value="ECO:0000318"/>
    <property type="project" value="GO_Central"/>
</dbReference>
<dbReference type="GO" id="GO:0030057">
    <property type="term" value="C:desmosome"/>
    <property type="evidence" value="ECO:0000250"/>
    <property type="project" value="UniProtKB"/>
</dbReference>
<dbReference type="GO" id="GO:0014704">
    <property type="term" value="C:intercalated disc"/>
    <property type="evidence" value="ECO:0000250"/>
    <property type="project" value="UniProtKB"/>
</dbReference>
<dbReference type="GO" id="GO:0030027">
    <property type="term" value="C:lamellipodium"/>
    <property type="evidence" value="ECO:0000318"/>
    <property type="project" value="GO_Central"/>
</dbReference>
<dbReference type="GO" id="GO:0043005">
    <property type="term" value="C:neuron projection"/>
    <property type="evidence" value="ECO:0000318"/>
    <property type="project" value="GO_Central"/>
</dbReference>
<dbReference type="GO" id="GO:0005886">
    <property type="term" value="C:plasma membrane"/>
    <property type="evidence" value="ECO:0000250"/>
    <property type="project" value="UniProtKB"/>
</dbReference>
<dbReference type="GO" id="GO:0098793">
    <property type="term" value="C:presynapse"/>
    <property type="evidence" value="ECO:0007669"/>
    <property type="project" value="GOC"/>
</dbReference>
<dbReference type="GO" id="GO:0042383">
    <property type="term" value="C:sarcolemma"/>
    <property type="evidence" value="ECO:0007669"/>
    <property type="project" value="UniProtKB-SubCell"/>
</dbReference>
<dbReference type="GO" id="GO:0008013">
    <property type="term" value="F:beta-catenin binding"/>
    <property type="evidence" value="ECO:0000318"/>
    <property type="project" value="GO_Central"/>
</dbReference>
<dbReference type="GO" id="GO:0045296">
    <property type="term" value="F:cadherin binding"/>
    <property type="evidence" value="ECO:0000318"/>
    <property type="project" value="GO_Central"/>
</dbReference>
<dbReference type="GO" id="GO:0005509">
    <property type="term" value="F:calcium ion binding"/>
    <property type="evidence" value="ECO:0000250"/>
    <property type="project" value="UniProtKB"/>
</dbReference>
<dbReference type="GO" id="GO:0034332">
    <property type="term" value="P:adherens junction organization"/>
    <property type="evidence" value="ECO:0000318"/>
    <property type="project" value="GO_Central"/>
</dbReference>
<dbReference type="GO" id="GO:0016339">
    <property type="term" value="P:calcium-dependent cell-cell adhesion via plasma membrane cell adhesion molecules"/>
    <property type="evidence" value="ECO:0000318"/>
    <property type="project" value="GO_Central"/>
</dbReference>
<dbReference type="GO" id="GO:0016477">
    <property type="term" value="P:cell migration"/>
    <property type="evidence" value="ECO:0000318"/>
    <property type="project" value="GO_Central"/>
</dbReference>
<dbReference type="GO" id="GO:0000902">
    <property type="term" value="P:cell morphogenesis"/>
    <property type="evidence" value="ECO:0000318"/>
    <property type="project" value="GO_Central"/>
</dbReference>
<dbReference type="GO" id="GO:0098609">
    <property type="term" value="P:cell-cell adhesion"/>
    <property type="evidence" value="ECO:0000250"/>
    <property type="project" value="UniProtKB"/>
</dbReference>
<dbReference type="GO" id="GO:0044331">
    <property type="term" value="P:cell-cell adhesion mediated by cadherin"/>
    <property type="evidence" value="ECO:0000250"/>
    <property type="project" value="UniProtKB"/>
</dbReference>
<dbReference type="GO" id="GO:0007043">
    <property type="term" value="P:cell-cell junction assembly"/>
    <property type="evidence" value="ECO:0000250"/>
    <property type="project" value="UniProtKB"/>
</dbReference>
<dbReference type="GO" id="GO:0010001">
    <property type="term" value="P:glial cell differentiation"/>
    <property type="evidence" value="ECO:0000250"/>
    <property type="project" value="UniProtKB"/>
</dbReference>
<dbReference type="GO" id="GO:0007156">
    <property type="term" value="P:homophilic cell adhesion via plasma membrane adhesion molecules"/>
    <property type="evidence" value="ECO:0007669"/>
    <property type="project" value="InterPro"/>
</dbReference>
<dbReference type="GO" id="GO:0014032">
    <property type="term" value="P:neural crest cell development"/>
    <property type="evidence" value="ECO:0000250"/>
    <property type="project" value="UniProtKB"/>
</dbReference>
<dbReference type="GO" id="GO:0097150">
    <property type="term" value="P:neuronal stem cell population maintenance"/>
    <property type="evidence" value="ECO:0000250"/>
    <property type="project" value="UniProtKB"/>
</dbReference>
<dbReference type="GO" id="GO:0007416">
    <property type="term" value="P:synapse assembly"/>
    <property type="evidence" value="ECO:0000318"/>
    <property type="project" value="GO_Central"/>
</dbReference>
<dbReference type="GO" id="GO:0097091">
    <property type="term" value="P:synaptic vesicle clustering"/>
    <property type="evidence" value="ECO:0000250"/>
    <property type="project" value="UniProtKB"/>
</dbReference>
<dbReference type="GO" id="GO:0003323">
    <property type="term" value="P:type B pancreatic cell development"/>
    <property type="evidence" value="ECO:0000250"/>
    <property type="project" value="UniProtKB"/>
</dbReference>
<dbReference type="CDD" id="cd11304">
    <property type="entry name" value="Cadherin_repeat"/>
    <property type="match status" value="4"/>
</dbReference>
<dbReference type="FunFam" id="2.60.40.60:FF:000011">
    <property type="entry name" value="Cadherin 1"/>
    <property type="match status" value="1"/>
</dbReference>
<dbReference type="FunFam" id="2.60.40.60:FF:000019">
    <property type="entry name" value="Cadherin 2"/>
    <property type="match status" value="1"/>
</dbReference>
<dbReference type="FunFam" id="2.60.40.60:FF:000022">
    <property type="entry name" value="Cadherin 2"/>
    <property type="match status" value="1"/>
</dbReference>
<dbReference type="FunFam" id="2.60.40.60:FF:000027">
    <property type="entry name" value="Cadherin 2"/>
    <property type="match status" value="1"/>
</dbReference>
<dbReference type="FunFam" id="2.60.40.60:FF:000045">
    <property type="entry name" value="Cadherin 2"/>
    <property type="match status" value="1"/>
</dbReference>
<dbReference type="FunFam" id="4.10.900.10:FF:000001">
    <property type="entry name" value="Cadherin 2"/>
    <property type="match status" value="1"/>
</dbReference>
<dbReference type="FunFam" id="2.60.40.60:FF:000139">
    <property type="entry name" value="Cadherin-2 preproprotein"/>
    <property type="match status" value="1"/>
</dbReference>
<dbReference type="Gene3D" id="2.60.40.60">
    <property type="entry name" value="Cadherins"/>
    <property type="match status" value="6"/>
</dbReference>
<dbReference type="Gene3D" id="4.10.900.10">
    <property type="entry name" value="TCF3-CBD (Catenin binding domain)"/>
    <property type="match status" value="1"/>
</dbReference>
<dbReference type="InterPro" id="IPR039808">
    <property type="entry name" value="Cadherin"/>
</dbReference>
<dbReference type="InterPro" id="IPR002126">
    <property type="entry name" value="Cadherin-like_dom"/>
</dbReference>
<dbReference type="InterPro" id="IPR015919">
    <property type="entry name" value="Cadherin-like_sf"/>
</dbReference>
<dbReference type="InterPro" id="IPR020894">
    <property type="entry name" value="Cadherin_CS"/>
</dbReference>
<dbReference type="InterPro" id="IPR014868">
    <property type="entry name" value="Cadherin_pro_dom"/>
</dbReference>
<dbReference type="InterPro" id="IPR000233">
    <property type="entry name" value="Cadherin_Y-type_LIR"/>
</dbReference>
<dbReference type="InterPro" id="IPR027397">
    <property type="entry name" value="Catenin-bd_sf"/>
</dbReference>
<dbReference type="PANTHER" id="PTHR24027:SF79">
    <property type="entry name" value="CADHERIN-2"/>
    <property type="match status" value="1"/>
</dbReference>
<dbReference type="PANTHER" id="PTHR24027">
    <property type="entry name" value="CADHERIN-23"/>
    <property type="match status" value="1"/>
</dbReference>
<dbReference type="Pfam" id="PF01049">
    <property type="entry name" value="CADH_Y-type_LIR"/>
    <property type="match status" value="1"/>
</dbReference>
<dbReference type="Pfam" id="PF00028">
    <property type="entry name" value="Cadherin"/>
    <property type="match status" value="5"/>
</dbReference>
<dbReference type="Pfam" id="PF08758">
    <property type="entry name" value="Cadherin_pro"/>
    <property type="match status" value="1"/>
</dbReference>
<dbReference type="PRINTS" id="PR00205">
    <property type="entry name" value="CADHERIN"/>
</dbReference>
<dbReference type="PRINTS" id="PR01820">
    <property type="entry name" value="DESMOCOLLIN"/>
</dbReference>
<dbReference type="SMART" id="SM00112">
    <property type="entry name" value="CA"/>
    <property type="match status" value="5"/>
</dbReference>
<dbReference type="SMART" id="SM01055">
    <property type="entry name" value="Cadherin_pro"/>
    <property type="match status" value="1"/>
</dbReference>
<dbReference type="SUPFAM" id="SSF49313">
    <property type="entry name" value="Cadherin-like"/>
    <property type="match status" value="6"/>
</dbReference>
<dbReference type="PROSITE" id="PS00232">
    <property type="entry name" value="CADHERIN_1"/>
    <property type="match status" value="3"/>
</dbReference>
<dbReference type="PROSITE" id="PS50268">
    <property type="entry name" value="CADHERIN_2"/>
    <property type="match status" value="5"/>
</dbReference>